<keyword id="KW-0028">Amino-acid biosynthesis</keyword>
<keyword id="KW-0963">Cytoplasm</keyword>
<keyword id="KW-0368">Histidine biosynthesis</keyword>
<keyword id="KW-0456">Lyase</keyword>
<accession>Q64RT2</accession>
<comment type="function">
    <text evidence="1">IGPS catalyzes the conversion of PRFAR and glutamine to IGP, AICAR and glutamate. The HisF subunit catalyzes the cyclization activity that produces IGP and AICAR from PRFAR using the ammonia provided by the HisH subunit.</text>
</comment>
<comment type="catalytic activity">
    <reaction evidence="1">
        <text>5-[(5-phospho-1-deoxy-D-ribulos-1-ylimino)methylamino]-1-(5-phospho-beta-D-ribosyl)imidazole-4-carboxamide + L-glutamine = D-erythro-1-(imidazol-4-yl)glycerol 3-phosphate + 5-amino-1-(5-phospho-beta-D-ribosyl)imidazole-4-carboxamide + L-glutamate + H(+)</text>
        <dbReference type="Rhea" id="RHEA:24793"/>
        <dbReference type="ChEBI" id="CHEBI:15378"/>
        <dbReference type="ChEBI" id="CHEBI:29985"/>
        <dbReference type="ChEBI" id="CHEBI:58278"/>
        <dbReference type="ChEBI" id="CHEBI:58359"/>
        <dbReference type="ChEBI" id="CHEBI:58475"/>
        <dbReference type="ChEBI" id="CHEBI:58525"/>
        <dbReference type="EC" id="4.3.2.10"/>
    </reaction>
</comment>
<comment type="pathway">
    <text evidence="1">Amino-acid biosynthesis; L-histidine biosynthesis; L-histidine from 5-phospho-alpha-D-ribose 1-diphosphate: step 5/9.</text>
</comment>
<comment type="subunit">
    <text evidence="1">Heterodimer of HisH and HisF.</text>
</comment>
<comment type="subcellular location">
    <subcellularLocation>
        <location evidence="1">Cytoplasm</location>
    </subcellularLocation>
</comment>
<comment type="similarity">
    <text evidence="1">Belongs to the HisA/HisF family.</text>
</comment>
<sequence length="250" mass="26945">MLAKRIIPCLDIKDGQTVKGTNFVNLRQAGDPVELGRAYSEQGADELVFLDITASHEGRKTFAELVRRIAANISIPFTVGGGINELSDVDRLLNAGADKISINSSAIRHPQLIDDIAKHFGSQVCVLAVDAKQTENGWKCYLNGGRIETDKELTAWTKEAQERGAGEVLFTSMNHDGVKTGYANEALAELASQLSIPVIASGGAGQMEHFRDAFTLGKADAALAASVFHFGEIKIPELKSYLCDQGITVR</sequence>
<proteinExistence type="inferred from homology"/>
<evidence type="ECO:0000255" key="1">
    <source>
        <dbReference type="HAMAP-Rule" id="MF_01013"/>
    </source>
</evidence>
<gene>
    <name evidence="1" type="primary">hisF</name>
    <name type="ordered locus">BF3053</name>
</gene>
<protein>
    <recommendedName>
        <fullName evidence="1">Imidazole glycerol phosphate synthase subunit HisF</fullName>
        <ecNumber evidence="1">4.3.2.10</ecNumber>
    </recommendedName>
    <alternativeName>
        <fullName evidence="1">IGP synthase cyclase subunit</fullName>
    </alternativeName>
    <alternativeName>
        <fullName evidence="1">IGP synthase subunit HisF</fullName>
    </alternativeName>
    <alternativeName>
        <fullName evidence="1">ImGP synthase subunit HisF</fullName>
        <shortName evidence="1">IGPS subunit HisF</shortName>
    </alternativeName>
</protein>
<organism>
    <name type="scientific">Bacteroides fragilis (strain YCH46)</name>
    <dbReference type="NCBI Taxonomy" id="295405"/>
    <lineage>
        <taxon>Bacteria</taxon>
        <taxon>Pseudomonadati</taxon>
        <taxon>Bacteroidota</taxon>
        <taxon>Bacteroidia</taxon>
        <taxon>Bacteroidales</taxon>
        <taxon>Bacteroidaceae</taxon>
        <taxon>Bacteroides</taxon>
    </lineage>
</organism>
<dbReference type="EC" id="4.3.2.10" evidence="1"/>
<dbReference type="EMBL" id="AP006841">
    <property type="protein sequence ID" value="BAD49799.1"/>
    <property type="molecule type" value="Genomic_DNA"/>
</dbReference>
<dbReference type="RefSeq" id="WP_011203119.1">
    <property type="nucleotide sequence ID" value="NC_006347.1"/>
</dbReference>
<dbReference type="RefSeq" id="YP_100333.1">
    <property type="nucleotide sequence ID" value="NC_006347.1"/>
</dbReference>
<dbReference type="SMR" id="Q64RT2"/>
<dbReference type="STRING" id="295405.BF3053"/>
<dbReference type="KEGG" id="bfr:BF3053"/>
<dbReference type="PATRIC" id="fig|295405.11.peg.2922"/>
<dbReference type="HOGENOM" id="CLU_048577_4_0_10"/>
<dbReference type="OrthoDB" id="9781903at2"/>
<dbReference type="UniPathway" id="UPA00031">
    <property type="reaction ID" value="UER00010"/>
</dbReference>
<dbReference type="Proteomes" id="UP000002197">
    <property type="component" value="Chromosome"/>
</dbReference>
<dbReference type="GO" id="GO:0005737">
    <property type="term" value="C:cytoplasm"/>
    <property type="evidence" value="ECO:0007669"/>
    <property type="project" value="UniProtKB-SubCell"/>
</dbReference>
<dbReference type="GO" id="GO:0000107">
    <property type="term" value="F:imidazoleglycerol-phosphate synthase activity"/>
    <property type="evidence" value="ECO:0007669"/>
    <property type="project" value="UniProtKB-UniRule"/>
</dbReference>
<dbReference type="GO" id="GO:0016829">
    <property type="term" value="F:lyase activity"/>
    <property type="evidence" value="ECO:0007669"/>
    <property type="project" value="UniProtKB-KW"/>
</dbReference>
<dbReference type="GO" id="GO:0000105">
    <property type="term" value="P:L-histidine biosynthetic process"/>
    <property type="evidence" value="ECO:0007669"/>
    <property type="project" value="UniProtKB-UniRule"/>
</dbReference>
<dbReference type="CDD" id="cd04731">
    <property type="entry name" value="HisF"/>
    <property type="match status" value="1"/>
</dbReference>
<dbReference type="FunFam" id="3.20.20.70:FF:000006">
    <property type="entry name" value="Imidazole glycerol phosphate synthase subunit HisF"/>
    <property type="match status" value="1"/>
</dbReference>
<dbReference type="Gene3D" id="3.20.20.70">
    <property type="entry name" value="Aldolase class I"/>
    <property type="match status" value="1"/>
</dbReference>
<dbReference type="HAMAP" id="MF_01013">
    <property type="entry name" value="HisF"/>
    <property type="match status" value="1"/>
</dbReference>
<dbReference type="InterPro" id="IPR013785">
    <property type="entry name" value="Aldolase_TIM"/>
</dbReference>
<dbReference type="InterPro" id="IPR006062">
    <property type="entry name" value="His_biosynth"/>
</dbReference>
<dbReference type="InterPro" id="IPR004651">
    <property type="entry name" value="HisF"/>
</dbReference>
<dbReference type="InterPro" id="IPR050064">
    <property type="entry name" value="IGPS_HisA/HisF"/>
</dbReference>
<dbReference type="InterPro" id="IPR011060">
    <property type="entry name" value="RibuloseP-bd_barrel"/>
</dbReference>
<dbReference type="NCBIfam" id="TIGR00735">
    <property type="entry name" value="hisF"/>
    <property type="match status" value="1"/>
</dbReference>
<dbReference type="PANTHER" id="PTHR21235:SF2">
    <property type="entry name" value="IMIDAZOLE GLYCEROL PHOSPHATE SYNTHASE HISHF"/>
    <property type="match status" value="1"/>
</dbReference>
<dbReference type="PANTHER" id="PTHR21235">
    <property type="entry name" value="IMIDAZOLE GLYCEROL PHOSPHATE SYNTHASE SUBUNIT HISF/H IGP SYNTHASE SUBUNIT HISF/H"/>
    <property type="match status" value="1"/>
</dbReference>
<dbReference type="Pfam" id="PF00977">
    <property type="entry name" value="His_biosynth"/>
    <property type="match status" value="1"/>
</dbReference>
<dbReference type="SUPFAM" id="SSF51366">
    <property type="entry name" value="Ribulose-phoshate binding barrel"/>
    <property type="match status" value="1"/>
</dbReference>
<reference key="1">
    <citation type="journal article" date="2004" name="Proc. Natl. Acad. Sci. U.S.A.">
        <title>Genomic analysis of Bacteroides fragilis reveals extensive DNA inversions regulating cell surface adaptation.</title>
        <authorList>
            <person name="Kuwahara T."/>
            <person name="Yamashita A."/>
            <person name="Hirakawa H."/>
            <person name="Nakayama H."/>
            <person name="Toh H."/>
            <person name="Okada N."/>
            <person name="Kuhara S."/>
            <person name="Hattori M."/>
            <person name="Hayashi T."/>
            <person name="Ohnishi Y."/>
        </authorList>
    </citation>
    <scope>NUCLEOTIDE SEQUENCE [LARGE SCALE GENOMIC DNA]</scope>
    <source>
        <strain>YCH46</strain>
    </source>
</reference>
<name>HIS6_BACFR</name>
<feature type="chain" id="PRO_0000142120" description="Imidazole glycerol phosphate synthase subunit HisF">
    <location>
        <begin position="1"/>
        <end position="250"/>
    </location>
</feature>
<feature type="active site" evidence="1">
    <location>
        <position position="11"/>
    </location>
</feature>
<feature type="active site" evidence="1">
    <location>
        <position position="130"/>
    </location>
</feature>